<accession>Q64010</accession>
<evidence type="ECO:0000250" key="1"/>
<evidence type="ECO:0000250" key="2">
    <source>
        <dbReference type="UniProtKB" id="P46108"/>
    </source>
</evidence>
<evidence type="ECO:0000255" key="3">
    <source>
        <dbReference type="PROSITE-ProRule" id="PRU00191"/>
    </source>
</evidence>
<evidence type="ECO:0000255" key="4">
    <source>
        <dbReference type="PROSITE-ProRule" id="PRU00192"/>
    </source>
</evidence>
<evidence type="ECO:0000256" key="5">
    <source>
        <dbReference type="SAM" id="MobiDB-lite"/>
    </source>
</evidence>
<evidence type="ECO:0000269" key="6">
    <source>
    </source>
</evidence>
<evidence type="ECO:0000269" key="7">
    <source>
    </source>
</evidence>
<evidence type="ECO:0000269" key="8">
    <source>
    </source>
</evidence>
<evidence type="ECO:0000303" key="9">
    <source>
    </source>
</evidence>
<evidence type="ECO:0000305" key="10"/>
<evidence type="ECO:0007829" key="11">
    <source>
        <dbReference type="PDB" id="1CKA"/>
    </source>
</evidence>
<evidence type="ECO:0007829" key="12">
    <source>
        <dbReference type="PDB" id="1M30"/>
    </source>
</evidence>
<evidence type="ECO:0007829" key="13">
    <source>
        <dbReference type="PDB" id="2GGR"/>
    </source>
</evidence>
<evidence type="ECO:0007829" key="14">
    <source>
        <dbReference type="PDB" id="5JN0"/>
    </source>
</evidence>
<evidence type="ECO:0007829" key="15">
    <source>
        <dbReference type="PDB" id="5L23"/>
    </source>
</evidence>
<feature type="initiator methionine" description="Removed" evidence="2">
    <location>
        <position position="1"/>
    </location>
</feature>
<feature type="chain" id="PRO_0000079352" description="Adapter molecule crk">
    <location>
        <begin position="2"/>
        <end position="304"/>
    </location>
</feature>
<feature type="domain" description="SH2" evidence="3">
    <location>
        <begin position="13"/>
        <end position="118"/>
    </location>
</feature>
<feature type="domain" description="SH3 1" evidence="4">
    <location>
        <begin position="132"/>
        <end position="192"/>
    </location>
</feature>
<feature type="domain" description="SH3 2" evidence="4">
    <location>
        <begin position="235"/>
        <end position="296"/>
    </location>
</feature>
<feature type="region of interest" description="Disordered" evidence="5">
    <location>
        <begin position="60"/>
        <end position="85"/>
    </location>
</feature>
<feature type="region of interest" description="Disordered" evidence="5">
    <location>
        <begin position="201"/>
        <end position="229"/>
    </location>
</feature>
<feature type="compositionally biased region" description="Pro residues" evidence="5">
    <location>
        <begin position="67"/>
        <end position="82"/>
    </location>
</feature>
<feature type="site" description="Proline switch" evidence="1">
    <location>
        <position position="237"/>
    </location>
</feature>
<feature type="modified residue" description="N-acetylalanine" evidence="2">
    <location>
        <position position="2"/>
    </location>
</feature>
<feature type="modified residue" description="Phosphoserine" evidence="2">
    <location>
        <position position="40"/>
    </location>
</feature>
<feature type="modified residue" description="Phosphoserine" evidence="2">
    <location>
        <position position="41"/>
    </location>
</feature>
<feature type="modified residue" description="Phosphoserine" evidence="2">
    <location>
        <position position="74"/>
    </location>
</feature>
<feature type="modified residue" description="Phosphoserine" evidence="2">
    <location>
        <position position="83"/>
    </location>
</feature>
<feature type="modified residue" description="Phosphotyrosine" evidence="2">
    <location>
        <position position="108"/>
    </location>
</feature>
<feature type="modified residue" description="Phosphoserine" evidence="2">
    <location>
        <position position="125"/>
    </location>
</feature>
<feature type="modified residue" description="Phosphotyrosine; by ABL1" evidence="8">
    <location>
        <position position="221"/>
    </location>
</feature>
<feature type="modified residue" description="Phosphotyrosine" evidence="2">
    <location>
        <position position="239"/>
    </location>
</feature>
<feature type="splice variant" id="VSP_004174" description="In isoform Crk-I." evidence="9">
    <location>
        <begin position="205"/>
        <end position="304"/>
    </location>
</feature>
<feature type="helix" evidence="14">
    <location>
        <begin position="20"/>
        <end position="27"/>
    </location>
</feature>
<feature type="strand" evidence="14">
    <location>
        <begin position="34"/>
        <end position="39"/>
    </location>
</feature>
<feature type="strand" evidence="14">
    <location>
        <begin position="41"/>
        <end position="43"/>
    </location>
</feature>
<feature type="strand" evidence="14">
    <location>
        <begin position="47"/>
        <end position="53"/>
    </location>
</feature>
<feature type="strand" evidence="14">
    <location>
        <begin position="56"/>
        <end position="63"/>
    </location>
</feature>
<feature type="strand" evidence="14">
    <location>
        <begin position="87"/>
        <end position="89"/>
    </location>
</feature>
<feature type="strand" evidence="14">
    <location>
        <begin position="92"/>
        <end position="96"/>
    </location>
</feature>
<feature type="helix" evidence="14">
    <location>
        <begin position="97"/>
        <end position="106"/>
    </location>
</feature>
<feature type="strand" evidence="14">
    <location>
        <begin position="109"/>
        <end position="111"/>
    </location>
</feature>
<feature type="strand" evidence="11">
    <location>
        <begin position="136"/>
        <end position="141"/>
    </location>
</feature>
<feature type="strand" evidence="12">
    <location>
        <begin position="147"/>
        <end position="150"/>
    </location>
</feature>
<feature type="strand" evidence="11">
    <location>
        <begin position="158"/>
        <end position="163"/>
    </location>
</feature>
<feature type="strand" evidence="11">
    <location>
        <begin position="165"/>
        <end position="173"/>
    </location>
</feature>
<feature type="strand" evidence="11">
    <location>
        <begin position="179"/>
        <end position="183"/>
    </location>
</feature>
<feature type="helix" evidence="11">
    <location>
        <begin position="184"/>
        <end position="186"/>
    </location>
</feature>
<feature type="strand" evidence="15">
    <location>
        <begin position="187"/>
        <end position="189"/>
    </location>
</feature>
<feature type="strand" evidence="13">
    <location>
        <begin position="238"/>
        <end position="244"/>
    </location>
</feature>
<feature type="strand" evidence="13">
    <location>
        <begin position="252"/>
        <end position="254"/>
    </location>
</feature>
<feature type="strand" evidence="13">
    <location>
        <begin position="262"/>
        <end position="268"/>
    </location>
</feature>
<feature type="strand" evidence="13">
    <location>
        <begin position="271"/>
        <end position="273"/>
    </location>
</feature>
<feature type="strand" evidence="13">
    <location>
        <begin position="275"/>
        <end position="279"/>
    </location>
</feature>
<feature type="strand" evidence="13">
    <location>
        <begin position="282"/>
        <end position="286"/>
    </location>
</feature>
<feature type="helix" evidence="13">
    <location>
        <begin position="288"/>
        <end position="290"/>
    </location>
</feature>
<feature type="strand" evidence="13">
    <location>
        <begin position="291"/>
        <end position="294"/>
    </location>
</feature>
<reference key="1">
    <citation type="journal article" date="1994" name="Oncogene">
        <title>The C-terminal SH3 domain of the mouse c-Crk protein negatively regulates tyrosine-phosphorylation of Crk associated p130 in rat 3Y1 cells.</title>
        <authorList>
            <person name="Ogawa S."/>
            <person name="Toyoshima H."/>
            <person name="Kozutsumi H."/>
            <person name="Hagiwara K."/>
            <person name="Sakai R."/>
            <person name="Tanaka T."/>
            <person name="Hirano N."/>
            <person name="Mano H."/>
            <person name="Yazaki Y."/>
            <person name="Hirai H."/>
        </authorList>
    </citation>
    <scope>NUCLEOTIDE SEQUENCE [MRNA] (ISOFORMS CRK-I AND CRK-II)</scope>
    <source>
        <tissue>Liver</tissue>
    </source>
</reference>
<reference key="2">
    <citation type="journal article" date="2005" name="Science">
        <title>The transcriptional landscape of the mammalian genome.</title>
        <authorList>
            <person name="Carninci P."/>
            <person name="Kasukawa T."/>
            <person name="Katayama S."/>
            <person name="Gough J."/>
            <person name="Frith M.C."/>
            <person name="Maeda N."/>
            <person name="Oyama R."/>
            <person name="Ravasi T."/>
            <person name="Lenhard B."/>
            <person name="Wells C."/>
            <person name="Kodzius R."/>
            <person name="Shimokawa K."/>
            <person name="Bajic V.B."/>
            <person name="Brenner S.E."/>
            <person name="Batalov S."/>
            <person name="Forrest A.R."/>
            <person name="Zavolan M."/>
            <person name="Davis M.J."/>
            <person name="Wilming L.G."/>
            <person name="Aidinis V."/>
            <person name="Allen J.E."/>
            <person name="Ambesi-Impiombato A."/>
            <person name="Apweiler R."/>
            <person name="Aturaliya R.N."/>
            <person name="Bailey T.L."/>
            <person name="Bansal M."/>
            <person name="Baxter L."/>
            <person name="Beisel K.W."/>
            <person name="Bersano T."/>
            <person name="Bono H."/>
            <person name="Chalk A.M."/>
            <person name="Chiu K.P."/>
            <person name="Choudhary V."/>
            <person name="Christoffels A."/>
            <person name="Clutterbuck D.R."/>
            <person name="Crowe M.L."/>
            <person name="Dalla E."/>
            <person name="Dalrymple B.P."/>
            <person name="de Bono B."/>
            <person name="Della Gatta G."/>
            <person name="di Bernardo D."/>
            <person name="Down T."/>
            <person name="Engstrom P."/>
            <person name="Fagiolini M."/>
            <person name="Faulkner G."/>
            <person name="Fletcher C.F."/>
            <person name="Fukushima T."/>
            <person name="Furuno M."/>
            <person name="Futaki S."/>
            <person name="Gariboldi M."/>
            <person name="Georgii-Hemming P."/>
            <person name="Gingeras T.R."/>
            <person name="Gojobori T."/>
            <person name="Green R.E."/>
            <person name="Gustincich S."/>
            <person name="Harbers M."/>
            <person name="Hayashi Y."/>
            <person name="Hensch T.K."/>
            <person name="Hirokawa N."/>
            <person name="Hill D."/>
            <person name="Huminiecki L."/>
            <person name="Iacono M."/>
            <person name="Ikeo K."/>
            <person name="Iwama A."/>
            <person name="Ishikawa T."/>
            <person name="Jakt M."/>
            <person name="Kanapin A."/>
            <person name="Katoh M."/>
            <person name="Kawasawa Y."/>
            <person name="Kelso J."/>
            <person name="Kitamura H."/>
            <person name="Kitano H."/>
            <person name="Kollias G."/>
            <person name="Krishnan S.P."/>
            <person name="Kruger A."/>
            <person name="Kummerfeld S.K."/>
            <person name="Kurochkin I.V."/>
            <person name="Lareau L.F."/>
            <person name="Lazarevic D."/>
            <person name="Lipovich L."/>
            <person name="Liu J."/>
            <person name="Liuni S."/>
            <person name="McWilliam S."/>
            <person name="Madan Babu M."/>
            <person name="Madera M."/>
            <person name="Marchionni L."/>
            <person name="Matsuda H."/>
            <person name="Matsuzawa S."/>
            <person name="Miki H."/>
            <person name="Mignone F."/>
            <person name="Miyake S."/>
            <person name="Morris K."/>
            <person name="Mottagui-Tabar S."/>
            <person name="Mulder N."/>
            <person name="Nakano N."/>
            <person name="Nakauchi H."/>
            <person name="Ng P."/>
            <person name="Nilsson R."/>
            <person name="Nishiguchi S."/>
            <person name="Nishikawa S."/>
            <person name="Nori F."/>
            <person name="Ohara O."/>
            <person name="Okazaki Y."/>
            <person name="Orlando V."/>
            <person name="Pang K.C."/>
            <person name="Pavan W.J."/>
            <person name="Pavesi G."/>
            <person name="Pesole G."/>
            <person name="Petrovsky N."/>
            <person name="Piazza S."/>
            <person name="Reed J."/>
            <person name="Reid J.F."/>
            <person name="Ring B.Z."/>
            <person name="Ringwald M."/>
            <person name="Rost B."/>
            <person name="Ruan Y."/>
            <person name="Salzberg S.L."/>
            <person name="Sandelin A."/>
            <person name="Schneider C."/>
            <person name="Schoenbach C."/>
            <person name="Sekiguchi K."/>
            <person name="Semple C.A."/>
            <person name="Seno S."/>
            <person name="Sessa L."/>
            <person name="Sheng Y."/>
            <person name="Shibata Y."/>
            <person name="Shimada H."/>
            <person name="Shimada K."/>
            <person name="Silva D."/>
            <person name="Sinclair B."/>
            <person name="Sperling S."/>
            <person name="Stupka E."/>
            <person name="Sugiura K."/>
            <person name="Sultana R."/>
            <person name="Takenaka Y."/>
            <person name="Taki K."/>
            <person name="Tammoja K."/>
            <person name="Tan S.L."/>
            <person name="Tang S."/>
            <person name="Taylor M.S."/>
            <person name="Tegner J."/>
            <person name="Teichmann S.A."/>
            <person name="Ueda H.R."/>
            <person name="van Nimwegen E."/>
            <person name="Verardo R."/>
            <person name="Wei C.L."/>
            <person name="Yagi K."/>
            <person name="Yamanishi H."/>
            <person name="Zabarovsky E."/>
            <person name="Zhu S."/>
            <person name="Zimmer A."/>
            <person name="Hide W."/>
            <person name="Bult C."/>
            <person name="Grimmond S.M."/>
            <person name="Teasdale R.D."/>
            <person name="Liu E.T."/>
            <person name="Brusic V."/>
            <person name="Quackenbush J."/>
            <person name="Wahlestedt C."/>
            <person name="Mattick J.S."/>
            <person name="Hume D.A."/>
            <person name="Kai C."/>
            <person name="Sasaki D."/>
            <person name="Tomaru Y."/>
            <person name="Fukuda S."/>
            <person name="Kanamori-Katayama M."/>
            <person name="Suzuki M."/>
            <person name="Aoki J."/>
            <person name="Arakawa T."/>
            <person name="Iida J."/>
            <person name="Imamura K."/>
            <person name="Itoh M."/>
            <person name="Kato T."/>
            <person name="Kawaji H."/>
            <person name="Kawagashira N."/>
            <person name="Kawashima T."/>
            <person name="Kojima M."/>
            <person name="Kondo S."/>
            <person name="Konno H."/>
            <person name="Nakano K."/>
            <person name="Ninomiya N."/>
            <person name="Nishio T."/>
            <person name="Okada M."/>
            <person name="Plessy C."/>
            <person name="Shibata K."/>
            <person name="Shiraki T."/>
            <person name="Suzuki S."/>
            <person name="Tagami M."/>
            <person name="Waki K."/>
            <person name="Watahiki A."/>
            <person name="Okamura-Oho Y."/>
            <person name="Suzuki H."/>
            <person name="Kawai J."/>
            <person name="Hayashizaki Y."/>
        </authorList>
    </citation>
    <scope>NUCLEOTIDE SEQUENCE [LARGE SCALE MRNA] (ISOFORM CRK-II)</scope>
    <source>
        <strain>C57BL/6J</strain>
        <tissue>Skin</tissue>
    </source>
</reference>
<reference key="3">
    <citation type="journal article" date="1994" name="EMBO J.">
        <title>c-Abl kinase regulates the protein binding activity of c-Crk.</title>
        <authorList>
            <person name="Feller S.M."/>
            <person name="Knudsen B."/>
            <person name="Hanafusa H."/>
        </authorList>
    </citation>
    <scope>PHOSPHORYLATION AT TYR-221</scope>
    <scope>INTERACTION WITH ABL1</scope>
</reference>
<reference key="4">
    <citation type="journal article" date="1997" name="J. Biol. Chem.">
        <title>An eps homology (EH) domain protein that binds to the ral-GTPase target, RalBP1.</title>
        <authorList>
            <person name="Yamaguchi A."/>
            <person name="Urano T."/>
            <person name="Goi T."/>
            <person name="Feig L.A."/>
        </authorList>
    </citation>
    <scope>INTERACTION WITH REPS1</scope>
    <source>
        <tissue>Muscle</tissue>
    </source>
</reference>
<reference key="5">
    <citation type="journal article" date="1998" name="J. Biol. Chem.">
        <title>Identification of vascular endothelial growth factor receptor-1 tyrosine phosphorylation sites and binding of SH2 domain-containing molecules.</title>
        <authorList>
            <person name="Ito N."/>
            <person name="Wernstedt C."/>
            <person name="Engstrom U."/>
            <person name="Claesson-Welsh L."/>
        </authorList>
    </citation>
    <scope>INTERACTION WITH FLT1</scope>
</reference>
<reference key="6">
    <citation type="journal article" date="1998" name="Mol. Cell. Biol.">
        <title>ASAP1, a phospholipid-dependent arf GTPase-activating protein that associates with and is phosphorylated by Src.</title>
        <authorList>
            <person name="Brown M.T."/>
            <person name="Andrade J."/>
            <person name="Radhakrishna H."/>
            <person name="Donaldson J.G."/>
            <person name="Cooper J.A."/>
            <person name="Randazzo P.A."/>
        </authorList>
    </citation>
    <scope>INTERACTION WITH DDEF1/ASAP1</scope>
</reference>
<reference key="7">
    <citation type="journal article" date="2000" name="J. Neurochem.">
        <title>Isolation and characterization of novel presenilin binding protein.</title>
        <authorList>
            <person name="Kashiwa A."/>
            <person name="Yoshida H."/>
            <person name="Lee S."/>
            <person name="Paladino T."/>
            <person name="Liu Y."/>
            <person name="Chen Q."/>
            <person name="Dargusch R."/>
            <person name="Schubert D."/>
            <person name="Kimura H."/>
        </authorList>
    </citation>
    <scope>INTERACTION WITH DOCK3</scope>
    <source>
        <tissue>Brain</tissue>
    </source>
</reference>
<reference key="8">
    <citation type="journal article" date="2002" name="J. Cell Sci.">
        <title>Ephrin-A5 induces rounding, blebbing and de-adhesion of EphA3-expressing 293T and melanoma cells by CrkII and Rho-mediated signalling.</title>
        <authorList>
            <person name="Lawrenson I.D."/>
            <person name="Wimmer-Kleikamp S.H."/>
            <person name="Lock P."/>
            <person name="Schoenwaelder S.M."/>
            <person name="Down M."/>
            <person name="Boyd A.W."/>
            <person name="Alewood P.F."/>
            <person name="Lackmann M."/>
        </authorList>
    </citation>
    <scope>FUNCTION</scope>
    <scope>INTERACTION WITH EPHA3</scope>
</reference>
<reference key="9">
    <citation type="journal article" date="2003" name="Exp. Cell Res.">
        <title>Identification of Tyr900 in the kinase domain of c-Kit as a Src-dependent phosphorylation site mediating interaction with c-Crk.</title>
        <authorList>
            <person name="Lennartsson J."/>
            <person name="Wernstedt C."/>
            <person name="Engstrom U."/>
            <person name="Hellman U."/>
            <person name="Ronnstrand L."/>
        </authorList>
    </citation>
    <scope>INTERACTION WITH KIT</scope>
    <scope>IDENTIFICATION BY MASS SPECTROMETRY</scope>
    <scope>PHOSPHORYLATION</scope>
</reference>
<reference key="10">
    <citation type="journal article" date="2003" name="J. Biol. Chem.">
        <title>The roles of Cbl-b and c-Cbl in insulin-stimulated glucose transport.</title>
        <authorList>
            <person name="Liu J."/>
            <person name="DeYoung S.M."/>
            <person name="Hwang J.B."/>
            <person name="O'Leary E.E."/>
            <person name="Saltiel A.R."/>
        </authorList>
    </citation>
    <scope>INTERACTION WITH CBLB</scope>
</reference>
<reference key="11">
    <citation type="journal article" date="2004" name="Mol. Cell. Proteomics">
        <title>Phosphoproteomic analysis of the developing mouse brain.</title>
        <authorList>
            <person name="Ballif B.A."/>
            <person name="Villen J."/>
            <person name="Beausoleil S.A."/>
            <person name="Schwartz D."/>
            <person name="Gygi S.P."/>
        </authorList>
    </citation>
    <scope>IDENTIFICATION BY MASS SPECTROMETRY [LARGE SCALE ANALYSIS]</scope>
    <source>
        <tissue>Embryonic brain</tissue>
    </source>
</reference>
<reference key="12">
    <citation type="journal article" date="2007" name="Proc. Natl. Acad. Sci. U.S.A.">
        <title>Large-scale phosphorylation analysis of mouse liver.</title>
        <authorList>
            <person name="Villen J."/>
            <person name="Beausoleil S.A."/>
            <person name="Gerber S.A."/>
            <person name="Gygi S.P."/>
        </authorList>
    </citation>
    <scope>IDENTIFICATION BY MASS SPECTROMETRY [LARGE SCALE ANALYSIS]</scope>
    <source>
        <tissue>Liver</tissue>
    </source>
</reference>
<reference key="13">
    <citation type="journal article" date="2008" name="J. Proteome Res.">
        <title>Large-scale identification and evolution indexing of tyrosine phosphorylation sites from murine brain.</title>
        <authorList>
            <person name="Ballif B.A."/>
            <person name="Carey G.R."/>
            <person name="Sunyaev S.R."/>
            <person name="Gygi S.P."/>
        </authorList>
    </citation>
    <scope>IDENTIFICATION BY MASS SPECTROMETRY [LARGE SCALE ANALYSIS]</scope>
    <source>
        <tissue>Brain</tissue>
    </source>
</reference>
<reference key="14">
    <citation type="journal article" date="2010" name="Cell">
        <title>A tissue-specific atlas of mouse protein phosphorylation and expression.</title>
        <authorList>
            <person name="Huttlin E.L."/>
            <person name="Jedrychowski M.P."/>
            <person name="Elias J.E."/>
            <person name="Goswami T."/>
            <person name="Rad R."/>
            <person name="Beausoleil S.A."/>
            <person name="Villen J."/>
            <person name="Haas W."/>
            <person name="Sowa M.E."/>
            <person name="Gygi S.P."/>
        </authorList>
    </citation>
    <scope>IDENTIFICATION BY MASS SPECTROMETRY [LARGE SCALE ANALYSIS]</scope>
    <source>
        <tissue>Brain</tissue>
        <tissue>Brown adipose tissue</tissue>
        <tissue>Heart</tissue>
        <tissue>Kidney</tissue>
        <tissue>Liver</tissue>
        <tissue>Lung</tissue>
        <tissue>Pancreas</tissue>
        <tissue>Spleen</tissue>
        <tissue>Testis</tissue>
    </source>
</reference>
<reference key="15">
    <citation type="journal article" date="1995" name="Structure">
        <title>Structural basis for the specific interaction of lysine-containing proline-rich peptides with the N-terminal SH3 domain of c-Crk.</title>
        <authorList>
            <person name="Wu X."/>
            <person name="Knudsen B."/>
            <person name="Feller S.M."/>
            <person name="Zheng J."/>
            <person name="Sali A."/>
            <person name="Cowburn D."/>
            <person name="Hanafusa H."/>
            <person name="Kuriyan J."/>
        </authorList>
    </citation>
    <scope>X-RAY CRYSTALLOGRAPHY (1.5 ANGSTROMS) OF 134-190</scope>
</reference>
<reference key="16">
    <citation type="journal article" date="1998" name="Science">
        <title>Exploiting the basis of proline recognition by SH3 and WW domains: design of N-substituted inhibitors.</title>
        <authorList>
            <person name="Nguyen J.T."/>
            <person name="Turck C.W."/>
            <person name="Cohen F.E."/>
            <person name="Zuckermann R.N."/>
            <person name="Lim W.A."/>
        </authorList>
    </citation>
    <scope>X-RAY CRYSTALLOGRAPHY (2.5 ANGSTROMS) OF 133-191</scope>
</reference>
<gene>
    <name type="primary">Crk</name>
    <name type="synonym">Crko</name>
</gene>
<keyword id="KW-0002">3D-structure</keyword>
<keyword id="KW-0007">Acetylation</keyword>
<keyword id="KW-0025">Alternative splicing</keyword>
<keyword id="KW-1003">Cell membrane</keyword>
<keyword id="KW-0963">Cytoplasm</keyword>
<keyword id="KW-0472">Membrane</keyword>
<keyword id="KW-0597">Phosphoprotein</keyword>
<keyword id="KW-0656">Proto-oncogene</keyword>
<keyword id="KW-1185">Reference proteome</keyword>
<keyword id="KW-0677">Repeat</keyword>
<keyword id="KW-0727">SH2 domain</keyword>
<keyword id="KW-0728">SH3 domain</keyword>
<dbReference type="EMBL" id="S72408">
    <property type="protein sequence ID" value="AAB30755.1"/>
    <property type="molecule type" value="mRNA"/>
</dbReference>
<dbReference type="EMBL" id="AK028488">
    <property type="protein sequence ID" value="BAC25976.1"/>
    <property type="molecule type" value="mRNA"/>
</dbReference>
<dbReference type="CCDS" id="CCDS25055.1">
    <molecule id="Q64010-1"/>
</dbReference>
<dbReference type="RefSeq" id="NP_598417.2">
    <molecule id="Q64010-1"/>
    <property type="nucleotide sequence ID" value="NM_133656.5"/>
</dbReference>
<dbReference type="PDB" id="1B07">
    <property type="method" value="X-ray"/>
    <property type="resolution" value="2.50 A"/>
    <property type="chains" value="A=134-190"/>
</dbReference>
<dbReference type="PDB" id="1CKA">
    <property type="method" value="X-ray"/>
    <property type="resolution" value="1.50 A"/>
    <property type="chains" value="A=134-190"/>
</dbReference>
<dbReference type="PDB" id="1CKB">
    <property type="method" value="X-ray"/>
    <property type="resolution" value="1.90 A"/>
    <property type="chains" value="A=134-190"/>
</dbReference>
<dbReference type="PDB" id="1JU5">
    <property type="method" value="NMR"/>
    <property type="chains" value="B=217-228"/>
</dbReference>
<dbReference type="PDB" id="1M30">
    <property type="method" value="NMR"/>
    <property type="chains" value="A=134-191"/>
</dbReference>
<dbReference type="PDB" id="1M3A">
    <property type="method" value="NMR"/>
    <property type="chains" value="A=135-191"/>
</dbReference>
<dbReference type="PDB" id="1M3B">
    <property type="method" value="NMR"/>
    <property type="chains" value="A=134-191"/>
</dbReference>
<dbReference type="PDB" id="1M3C">
    <property type="method" value="NMR"/>
    <property type="chains" value="A=132-191"/>
</dbReference>
<dbReference type="PDB" id="2GGR">
    <property type="method" value="NMR"/>
    <property type="chains" value="A=230-304"/>
</dbReference>
<dbReference type="PDB" id="5IH2">
    <property type="method" value="X-ray"/>
    <property type="resolution" value="1.80 A"/>
    <property type="chains" value="A/B=134-191"/>
</dbReference>
<dbReference type="PDB" id="5JN0">
    <property type="method" value="X-ray"/>
    <property type="resolution" value="1.68 A"/>
    <property type="chains" value="A=6-121"/>
</dbReference>
<dbReference type="PDB" id="5L23">
    <property type="method" value="X-ray"/>
    <property type="resolution" value="1.77 A"/>
    <property type="chains" value="A=134-191"/>
</dbReference>
<dbReference type="PDBsum" id="1B07"/>
<dbReference type="PDBsum" id="1CKA"/>
<dbReference type="PDBsum" id="1CKB"/>
<dbReference type="PDBsum" id="1JU5"/>
<dbReference type="PDBsum" id="1M30"/>
<dbReference type="PDBsum" id="1M3A"/>
<dbReference type="PDBsum" id="1M3B"/>
<dbReference type="PDBsum" id="1M3C"/>
<dbReference type="PDBsum" id="2GGR"/>
<dbReference type="PDBsum" id="5IH2"/>
<dbReference type="PDBsum" id="5JN0"/>
<dbReference type="PDBsum" id="5L23"/>
<dbReference type="BMRB" id="Q64010"/>
<dbReference type="SMR" id="Q64010"/>
<dbReference type="BioGRID" id="198887">
    <property type="interactions" value="28"/>
</dbReference>
<dbReference type="CORUM" id="Q64010"/>
<dbReference type="DIP" id="DIP-57059N"/>
<dbReference type="FunCoup" id="Q64010">
    <property type="interactions" value="2356"/>
</dbReference>
<dbReference type="IntAct" id="Q64010">
    <property type="interactions" value="25"/>
</dbReference>
<dbReference type="MINT" id="Q64010"/>
<dbReference type="STRING" id="10090.ENSMUSP00000017920"/>
<dbReference type="GlyGen" id="Q64010">
    <property type="glycosylation" value="1 site, 1 N-linked glycan (1 site)"/>
</dbReference>
<dbReference type="iPTMnet" id="Q64010"/>
<dbReference type="PhosphoSitePlus" id="Q64010"/>
<dbReference type="jPOST" id="Q64010"/>
<dbReference type="PaxDb" id="10090-ENSMUSP00000017920"/>
<dbReference type="PeptideAtlas" id="Q64010"/>
<dbReference type="ProteomicsDB" id="284173">
    <molecule id="Q64010-1"/>
</dbReference>
<dbReference type="ProteomicsDB" id="284174">
    <molecule id="Q64010-2"/>
</dbReference>
<dbReference type="Pumba" id="Q64010"/>
<dbReference type="Antibodypedia" id="4185">
    <property type="antibodies" value="620 antibodies from 38 providers"/>
</dbReference>
<dbReference type="DNASU" id="12928"/>
<dbReference type="Ensembl" id="ENSMUST00000017920.14">
    <molecule id="Q64010-1"/>
    <property type="protein sequence ID" value="ENSMUSP00000017920.8"/>
    <property type="gene ID" value="ENSMUSG00000017776.16"/>
</dbReference>
<dbReference type="GeneID" id="12928"/>
<dbReference type="KEGG" id="mmu:12928"/>
<dbReference type="UCSC" id="uc007keq.2">
    <molecule id="Q64010-1"/>
    <property type="organism name" value="mouse"/>
</dbReference>
<dbReference type="AGR" id="MGI:88508"/>
<dbReference type="CTD" id="1398"/>
<dbReference type="MGI" id="MGI:88508">
    <property type="gene designation" value="Crk"/>
</dbReference>
<dbReference type="VEuPathDB" id="HostDB:ENSMUSG00000017776"/>
<dbReference type="eggNOG" id="KOG4792">
    <property type="taxonomic scope" value="Eukaryota"/>
</dbReference>
<dbReference type="GeneTree" id="ENSGT00820000127055"/>
<dbReference type="HOGENOM" id="CLU_060542_0_1_1"/>
<dbReference type="InParanoid" id="Q64010"/>
<dbReference type="OrthoDB" id="9204160at2759"/>
<dbReference type="PhylomeDB" id="Q64010"/>
<dbReference type="TreeFam" id="TF321436"/>
<dbReference type="Reactome" id="R-MMU-170984">
    <property type="pathway name" value="ARMS-mediated activation"/>
</dbReference>
<dbReference type="Reactome" id="R-MMU-186763">
    <property type="pathway name" value="Downstream signal transduction"/>
</dbReference>
<dbReference type="Reactome" id="R-MMU-2029482">
    <property type="pathway name" value="Regulation of actin dynamics for phagocytic cup formation"/>
</dbReference>
<dbReference type="Reactome" id="R-MMU-372708">
    <property type="pathway name" value="p130Cas linkage to MAPK signaling for integrins"/>
</dbReference>
<dbReference type="Reactome" id="R-MMU-4420097">
    <property type="pathway name" value="VEGFA-VEGFR2 Pathway"/>
</dbReference>
<dbReference type="Reactome" id="R-MMU-8849471">
    <property type="pathway name" value="PTK6 Regulates RHO GTPases, RAS GTPase and MAP kinases"/>
</dbReference>
<dbReference type="Reactome" id="R-MMU-8875555">
    <property type="pathway name" value="MET activates RAP1 and RAC1"/>
</dbReference>
<dbReference type="Reactome" id="R-MMU-8875656">
    <property type="pathway name" value="MET receptor recycling"/>
</dbReference>
<dbReference type="Reactome" id="R-MMU-912631">
    <property type="pathway name" value="Regulation of signaling by CBL"/>
</dbReference>
<dbReference type="BioGRID-ORCS" id="12928">
    <property type="hits" value="4 hits in 76 CRISPR screens"/>
</dbReference>
<dbReference type="ChiTaRS" id="Crk">
    <property type="organism name" value="mouse"/>
</dbReference>
<dbReference type="EvolutionaryTrace" id="Q64010"/>
<dbReference type="PRO" id="PR:Q64010"/>
<dbReference type="Proteomes" id="UP000000589">
    <property type="component" value="Chromosome 11"/>
</dbReference>
<dbReference type="RNAct" id="Q64010">
    <property type="molecule type" value="protein"/>
</dbReference>
<dbReference type="Bgee" id="ENSMUSG00000017776">
    <property type="expression patterns" value="Expressed in atrioventricular valve and 261 other cell types or tissues"/>
</dbReference>
<dbReference type="ExpressionAtlas" id="Q64010">
    <property type="expression patterns" value="baseline and differential"/>
</dbReference>
<dbReference type="GO" id="GO:0015629">
    <property type="term" value="C:actin cytoskeleton"/>
    <property type="evidence" value="ECO:0000314"/>
    <property type="project" value="MGI"/>
</dbReference>
<dbReference type="GO" id="GO:0005737">
    <property type="term" value="C:cytoplasm"/>
    <property type="evidence" value="ECO:0007669"/>
    <property type="project" value="UniProtKB-SubCell"/>
</dbReference>
<dbReference type="GO" id="GO:0016020">
    <property type="term" value="C:membrane"/>
    <property type="evidence" value="ECO:0000315"/>
    <property type="project" value="UniProtKB"/>
</dbReference>
<dbReference type="GO" id="GO:0031594">
    <property type="term" value="C:neuromuscular junction"/>
    <property type="evidence" value="ECO:0000314"/>
    <property type="project" value="SynGO"/>
</dbReference>
<dbReference type="GO" id="GO:0005886">
    <property type="term" value="C:plasma membrane"/>
    <property type="evidence" value="ECO:0007669"/>
    <property type="project" value="UniProtKB-SubCell"/>
</dbReference>
<dbReference type="GO" id="GO:0032991">
    <property type="term" value="C:protein-containing complex"/>
    <property type="evidence" value="ECO:0007669"/>
    <property type="project" value="Ensembl"/>
</dbReference>
<dbReference type="GO" id="GO:0008092">
    <property type="term" value="F:cytoskeletal protein binding"/>
    <property type="evidence" value="ECO:0007669"/>
    <property type="project" value="Ensembl"/>
</dbReference>
<dbReference type="GO" id="GO:0046875">
    <property type="term" value="F:ephrin receptor binding"/>
    <property type="evidence" value="ECO:0000353"/>
    <property type="project" value="UniProtKB"/>
</dbReference>
<dbReference type="GO" id="GO:0005159">
    <property type="term" value="F:insulin-like growth factor receptor binding"/>
    <property type="evidence" value="ECO:0007669"/>
    <property type="project" value="Ensembl"/>
</dbReference>
<dbReference type="GO" id="GO:0001784">
    <property type="term" value="F:phosphotyrosine residue binding"/>
    <property type="evidence" value="ECO:0007669"/>
    <property type="project" value="Ensembl"/>
</dbReference>
<dbReference type="GO" id="GO:0045309">
    <property type="term" value="F:protein phosphorylated amino acid binding"/>
    <property type="evidence" value="ECO:0000314"/>
    <property type="project" value="MGI"/>
</dbReference>
<dbReference type="GO" id="GO:1990782">
    <property type="term" value="F:protein tyrosine kinase binding"/>
    <property type="evidence" value="ECO:0007669"/>
    <property type="project" value="Ensembl"/>
</dbReference>
<dbReference type="GO" id="GO:0097110">
    <property type="term" value="F:scaffold protein binding"/>
    <property type="evidence" value="ECO:0007669"/>
    <property type="project" value="Ensembl"/>
</dbReference>
<dbReference type="GO" id="GO:0042169">
    <property type="term" value="F:SH2 domain binding"/>
    <property type="evidence" value="ECO:0007669"/>
    <property type="project" value="Ensembl"/>
</dbReference>
<dbReference type="GO" id="GO:0017124">
    <property type="term" value="F:SH3 domain binding"/>
    <property type="evidence" value="ECO:0007669"/>
    <property type="project" value="Ensembl"/>
</dbReference>
<dbReference type="GO" id="GO:0035591">
    <property type="term" value="F:signaling adaptor activity"/>
    <property type="evidence" value="ECO:0000314"/>
    <property type="project" value="MGI"/>
</dbReference>
<dbReference type="GO" id="GO:0030159">
    <property type="term" value="F:signaling receptor complex adaptor activity"/>
    <property type="evidence" value="ECO:0000353"/>
    <property type="project" value="BHF-UCL"/>
</dbReference>
<dbReference type="GO" id="GO:0031625">
    <property type="term" value="F:ubiquitin protein ligase binding"/>
    <property type="evidence" value="ECO:0000353"/>
    <property type="project" value="BHF-UCL"/>
</dbReference>
<dbReference type="GO" id="GO:0030036">
    <property type="term" value="P:actin cytoskeleton organization"/>
    <property type="evidence" value="ECO:0000250"/>
    <property type="project" value="UniProtKB"/>
</dbReference>
<dbReference type="GO" id="GO:0060326">
    <property type="term" value="P:cell chemotaxis"/>
    <property type="evidence" value="ECO:0000316"/>
    <property type="project" value="MGI"/>
</dbReference>
<dbReference type="GO" id="GO:0008283">
    <property type="term" value="P:cell population proliferation"/>
    <property type="evidence" value="ECO:0000316"/>
    <property type="project" value="MGI"/>
</dbReference>
<dbReference type="GO" id="GO:1990859">
    <property type="term" value="P:cellular response to endothelin"/>
    <property type="evidence" value="ECO:0007669"/>
    <property type="project" value="Ensembl"/>
</dbReference>
<dbReference type="GO" id="GO:1990314">
    <property type="term" value="P:cellular response to insulin-like growth factor stimulus"/>
    <property type="evidence" value="ECO:0007669"/>
    <property type="project" value="Ensembl"/>
</dbReference>
<dbReference type="GO" id="GO:1990090">
    <property type="term" value="P:cellular response to nerve growth factor stimulus"/>
    <property type="evidence" value="ECO:0007669"/>
    <property type="project" value="Ensembl"/>
</dbReference>
<dbReference type="GO" id="GO:0071732">
    <property type="term" value="P:cellular response to nitric oxide"/>
    <property type="evidence" value="ECO:0007669"/>
    <property type="project" value="Ensembl"/>
</dbReference>
<dbReference type="GO" id="GO:0071560">
    <property type="term" value="P:cellular response to transforming growth factor beta stimulus"/>
    <property type="evidence" value="ECO:0007669"/>
    <property type="project" value="Ensembl"/>
</dbReference>
<dbReference type="GO" id="GO:0098749">
    <property type="term" value="P:cerebellar neuron development"/>
    <property type="evidence" value="ECO:0000316"/>
    <property type="project" value="MGI"/>
</dbReference>
<dbReference type="GO" id="GO:0021987">
    <property type="term" value="P:cerebral cortex development"/>
    <property type="evidence" value="ECO:0000316"/>
    <property type="project" value="MGI"/>
</dbReference>
<dbReference type="GO" id="GO:0016358">
    <property type="term" value="P:dendrite development"/>
    <property type="evidence" value="ECO:0000316"/>
    <property type="project" value="MGI"/>
</dbReference>
<dbReference type="GO" id="GO:0007167">
    <property type="term" value="P:enzyme-linked receptor protein signaling pathway"/>
    <property type="evidence" value="ECO:0000314"/>
    <property type="project" value="MGI"/>
</dbReference>
<dbReference type="GO" id="GO:0048013">
    <property type="term" value="P:ephrin receptor signaling pathway"/>
    <property type="evidence" value="ECO:0000250"/>
    <property type="project" value="UniProtKB"/>
</dbReference>
<dbReference type="GO" id="GO:0030010">
    <property type="term" value="P:establishment of cell polarity"/>
    <property type="evidence" value="ECO:0000316"/>
    <property type="project" value="MGI"/>
</dbReference>
<dbReference type="GO" id="GO:0035685">
    <property type="term" value="P:helper T cell diapedesis"/>
    <property type="evidence" value="ECO:0000316"/>
    <property type="project" value="MGI"/>
</dbReference>
<dbReference type="GO" id="GO:0021766">
    <property type="term" value="P:hippocampus development"/>
    <property type="evidence" value="ECO:0000316"/>
    <property type="project" value="MGI"/>
</dbReference>
<dbReference type="GO" id="GO:0006629">
    <property type="term" value="P:lipid metabolic process"/>
    <property type="evidence" value="ECO:0000316"/>
    <property type="project" value="MGI"/>
</dbReference>
<dbReference type="GO" id="GO:2000146">
    <property type="term" value="P:negative regulation of cell motility"/>
    <property type="evidence" value="ECO:0007669"/>
    <property type="project" value="Ensembl"/>
</dbReference>
<dbReference type="GO" id="GO:0045953">
    <property type="term" value="P:negative regulation of natural killer cell mediated cytotoxicity"/>
    <property type="evidence" value="ECO:0007669"/>
    <property type="project" value="Ensembl"/>
</dbReference>
<dbReference type="GO" id="GO:0061045">
    <property type="term" value="P:negative regulation of wound healing"/>
    <property type="evidence" value="ECO:0007669"/>
    <property type="project" value="Ensembl"/>
</dbReference>
<dbReference type="GO" id="GO:0001764">
    <property type="term" value="P:neuron migration"/>
    <property type="evidence" value="ECO:0000316"/>
    <property type="project" value="MGI"/>
</dbReference>
<dbReference type="GO" id="GO:0046330">
    <property type="term" value="P:positive regulation of JNK cascade"/>
    <property type="evidence" value="ECO:0007669"/>
    <property type="project" value="Ensembl"/>
</dbReference>
<dbReference type="GO" id="GO:0035022">
    <property type="term" value="P:positive regulation of Rac protein signal transduction"/>
    <property type="evidence" value="ECO:0000315"/>
    <property type="project" value="MGI"/>
</dbReference>
<dbReference type="GO" id="GO:1904395">
    <property type="term" value="P:positive regulation of skeletal muscle acetylcholine-gated channel clustering"/>
    <property type="evidence" value="ECO:0000314"/>
    <property type="project" value="MGI"/>
</dbReference>
<dbReference type="GO" id="GO:0014911">
    <property type="term" value="P:positive regulation of smooth muscle cell migration"/>
    <property type="evidence" value="ECO:0007669"/>
    <property type="project" value="Ensembl"/>
</dbReference>
<dbReference type="GO" id="GO:1900026">
    <property type="term" value="P:positive regulation of substrate adhesion-dependent cell spreading"/>
    <property type="evidence" value="ECO:0000250"/>
    <property type="project" value="UniProtKB"/>
</dbReference>
<dbReference type="GO" id="GO:0098698">
    <property type="term" value="P:postsynaptic specialization assembly"/>
    <property type="evidence" value="ECO:0000314"/>
    <property type="project" value="SynGO"/>
</dbReference>
<dbReference type="GO" id="GO:0072657">
    <property type="term" value="P:protein localization to membrane"/>
    <property type="evidence" value="ECO:0007669"/>
    <property type="project" value="Ensembl"/>
</dbReference>
<dbReference type="GO" id="GO:0038026">
    <property type="term" value="P:reelin-mediated signaling pathway"/>
    <property type="evidence" value="ECO:0000316"/>
    <property type="project" value="MGI"/>
</dbReference>
<dbReference type="GO" id="GO:0032956">
    <property type="term" value="P:regulation of actin cytoskeleton organization"/>
    <property type="evidence" value="ECO:0000316"/>
    <property type="project" value="MGI"/>
</dbReference>
<dbReference type="GO" id="GO:0033628">
    <property type="term" value="P:regulation of cell adhesion mediated by integrin"/>
    <property type="evidence" value="ECO:0000316"/>
    <property type="project" value="MGI"/>
</dbReference>
<dbReference type="GO" id="GO:0008360">
    <property type="term" value="P:regulation of cell shape"/>
    <property type="evidence" value="ECO:0000250"/>
    <property type="project" value="UniProtKB"/>
</dbReference>
<dbReference type="GO" id="GO:0050773">
    <property type="term" value="P:regulation of dendrite development"/>
    <property type="evidence" value="ECO:0000316"/>
    <property type="project" value="MGI"/>
</dbReference>
<dbReference type="GO" id="GO:0043087">
    <property type="term" value="P:regulation of GTPase activity"/>
    <property type="evidence" value="ECO:0000250"/>
    <property type="project" value="UniProtKB"/>
</dbReference>
<dbReference type="GO" id="GO:0002685">
    <property type="term" value="P:regulation of leukocyte migration"/>
    <property type="evidence" value="ECO:0000316"/>
    <property type="project" value="MGI"/>
</dbReference>
<dbReference type="GO" id="GO:2000404">
    <property type="term" value="P:regulation of T cell migration"/>
    <property type="evidence" value="ECO:0000316"/>
    <property type="project" value="MGI"/>
</dbReference>
<dbReference type="GO" id="GO:0061847">
    <property type="term" value="P:response to cholecystokinin"/>
    <property type="evidence" value="ECO:0007669"/>
    <property type="project" value="Ensembl"/>
</dbReference>
<dbReference type="GO" id="GO:0035728">
    <property type="term" value="P:response to hepatocyte growth factor"/>
    <property type="evidence" value="ECO:0007669"/>
    <property type="project" value="Ensembl"/>
</dbReference>
<dbReference type="GO" id="GO:0042542">
    <property type="term" value="P:response to hydrogen peroxide"/>
    <property type="evidence" value="ECO:0007669"/>
    <property type="project" value="Ensembl"/>
</dbReference>
<dbReference type="GO" id="GO:1901652">
    <property type="term" value="P:response to peptide"/>
    <property type="evidence" value="ECO:0007669"/>
    <property type="project" value="Ensembl"/>
</dbReference>
<dbReference type="GO" id="GO:0001878">
    <property type="term" value="P:response to yeast"/>
    <property type="evidence" value="ECO:0007669"/>
    <property type="project" value="Ensembl"/>
</dbReference>
<dbReference type="CDD" id="cd09926">
    <property type="entry name" value="SH2_CRK_like"/>
    <property type="match status" value="1"/>
</dbReference>
<dbReference type="CDD" id="cd11759">
    <property type="entry name" value="SH3_CRK_C"/>
    <property type="match status" value="1"/>
</dbReference>
<dbReference type="CDD" id="cd11758">
    <property type="entry name" value="SH3_CRK_N"/>
    <property type="match status" value="1"/>
</dbReference>
<dbReference type="FunFam" id="2.30.30.40:FF:000065">
    <property type="entry name" value="adapter molecule crk isoform X1"/>
    <property type="match status" value="1"/>
</dbReference>
<dbReference type="FunFam" id="2.30.30.40:FF:000157">
    <property type="entry name" value="adapter molecule crk isoform X1"/>
    <property type="match status" value="1"/>
</dbReference>
<dbReference type="FunFam" id="3.30.505.10:FF:000026">
    <property type="entry name" value="adapter molecule crk isoform X1"/>
    <property type="match status" value="1"/>
</dbReference>
<dbReference type="Gene3D" id="3.30.505.10">
    <property type="entry name" value="SH2 domain"/>
    <property type="match status" value="1"/>
</dbReference>
<dbReference type="Gene3D" id="2.30.30.40">
    <property type="entry name" value="SH3 Domains"/>
    <property type="match status" value="2"/>
</dbReference>
<dbReference type="InterPro" id="IPR035458">
    <property type="entry name" value="CRK_SH3_C"/>
</dbReference>
<dbReference type="InterPro" id="IPR035457">
    <property type="entry name" value="CRK_SH3_N"/>
</dbReference>
<dbReference type="InterPro" id="IPR000980">
    <property type="entry name" value="SH2"/>
</dbReference>
<dbReference type="InterPro" id="IPR036860">
    <property type="entry name" value="SH2_dom_sf"/>
</dbReference>
<dbReference type="InterPro" id="IPR036028">
    <property type="entry name" value="SH3-like_dom_sf"/>
</dbReference>
<dbReference type="InterPro" id="IPR001452">
    <property type="entry name" value="SH3_domain"/>
</dbReference>
<dbReference type="InterPro" id="IPR051184">
    <property type="entry name" value="Tyrosine-phos_adapter"/>
</dbReference>
<dbReference type="PANTHER" id="PTHR19969:SF8">
    <property type="entry name" value="ADAPTER MOLECULE CRK"/>
    <property type="match status" value="1"/>
</dbReference>
<dbReference type="PANTHER" id="PTHR19969">
    <property type="entry name" value="SH2-SH3 ADAPTOR PROTEIN-RELATED"/>
    <property type="match status" value="1"/>
</dbReference>
<dbReference type="Pfam" id="PF00017">
    <property type="entry name" value="SH2"/>
    <property type="match status" value="1"/>
</dbReference>
<dbReference type="Pfam" id="PF00018">
    <property type="entry name" value="SH3_1"/>
    <property type="match status" value="1"/>
</dbReference>
<dbReference type="Pfam" id="PF07653">
    <property type="entry name" value="SH3_2"/>
    <property type="match status" value="1"/>
</dbReference>
<dbReference type="PRINTS" id="PR00401">
    <property type="entry name" value="SH2DOMAIN"/>
</dbReference>
<dbReference type="PRINTS" id="PR00452">
    <property type="entry name" value="SH3DOMAIN"/>
</dbReference>
<dbReference type="SMART" id="SM00252">
    <property type="entry name" value="SH2"/>
    <property type="match status" value="1"/>
</dbReference>
<dbReference type="SMART" id="SM00326">
    <property type="entry name" value="SH3"/>
    <property type="match status" value="2"/>
</dbReference>
<dbReference type="SUPFAM" id="SSF55550">
    <property type="entry name" value="SH2 domain"/>
    <property type="match status" value="1"/>
</dbReference>
<dbReference type="SUPFAM" id="SSF50044">
    <property type="entry name" value="SH3-domain"/>
    <property type="match status" value="2"/>
</dbReference>
<dbReference type="PROSITE" id="PS50001">
    <property type="entry name" value="SH2"/>
    <property type="match status" value="1"/>
</dbReference>
<dbReference type="PROSITE" id="PS50002">
    <property type="entry name" value="SH3"/>
    <property type="match status" value="2"/>
</dbReference>
<sequence>MAGNFDSEERSSWYWGRLSRQEAVALLQGQRHGVFLVRDSSTSPGDYVLSVSENSRVSHYIINSSGPRPPVPPSPAQPPPGVSPSRLRIGDQEFDSLPALLEFYKIHYLDTTTLIEPVARSRQGSGVILRQEEAEYVRALFDFNGNDEEDLPFKKGDILRIRDKPEEQWWNAEDSEGKRGMIPVPYVEKYRPASASVSALIGGNQEGSHPQPLGGPEPGPYAQPSVNTPLPNLQNGPIYARVIQKRVPNAYDKTALALEVGELVKVTKINVSGQWEGECNGKRGHFPFTHVRLLDQQNPDEDFS</sequence>
<name>CRK_MOUSE</name>
<protein>
    <recommendedName>
        <fullName>Adapter molecule crk</fullName>
    </recommendedName>
    <alternativeName>
        <fullName>Proto-oncogene c-Crk</fullName>
    </alternativeName>
    <alternativeName>
        <fullName>p38</fullName>
    </alternativeName>
</protein>
<organism>
    <name type="scientific">Mus musculus</name>
    <name type="common">Mouse</name>
    <dbReference type="NCBI Taxonomy" id="10090"/>
    <lineage>
        <taxon>Eukaryota</taxon>
        <taxon>Metazoa</taxon>
        <taxon>Chordata</taxon>
        <taxon>Craniata</taxon>
        <taxon>Vertebrata</taxon>
        <taxon>Euteleostomi</taxon>
        <taxon>Mammalia</taxon>
        <taxon>Eutheria</taxon>
        <taxon>Euarchontoglires</taxon>
        <taxon>Glires</taxon>
        <taxon>Rodentia</taxon>
        <taxon>Myomorpha</taxon>
        <taxon>Muroidea</taxon>
        <taxon>Muridae</taxon>
        <taxon>Murinae</taxon>
        <taxon>Mus</taxon>
        <taxon>Mus</taxon>
    </lineage>
</organism>
<proteinExistence type="evidence at protein level"/>
<comment type="function">
    <text evidence="2">Involved in cell branching and adhesion mediated by BCAR1-CRK-RAPGEF1 signaling and activation of RAP1.</text>
</comment>
<comment type="function">
    <text evidence="2 6">Isoform CRK-II: Regulates cell adhesion, spreading and migration. Mediates attachment-induced MAPK8 activation, membrane ruffling and cell motility in a Rac-dependent manner. Involved in phagocytosis of apoptotic cells and cell motility via its interaction with DOCK1 and DOCK4 (By similarity). May regulate the EFNA5-EPHA3 signaling (PubMed:11870224).</text>
</comment>
<comment type="subunit">
    <text evidence="2">Component of a complex comprised of SH2D3C, BCAR1/CAS, and CRK (By similarity). Within the complex, interacts with SH2D3C (via C-terminus), and BCAR1/CAS (By similarity). Found in a complex with ABL1, ABL2, CRK and UNC119; leading to the inhibition of CRK phosphorylation by ABL kinases (By similarity). Interacts with ABL1, C3G, DOCK3, DOCK5, MAP4K1, MAPK8 and SOS via its first SH3 domain. Interacts (via SH2 domain) with BCAR1, CBL, CBLB, PXN, IRS4 and GAB1 upon stimulus-induced tyrosine phosphorylation. Interacts (via SH2 domain) with several tyrosine-phosphorylated growth factor receptors such as EGFR and INSR. Interacts with FLT1 (tyrosine-phosphorylated). Interacts with DOCK1 and DOCK4. Interacts with SHB. Interacts with PEAK1. Interacts with FASLG. Interacts with FLT4 (tyrosine-phosphorylated). Part of a collagen stimulated complex involved in cell migration composed of CDC42, CRK, TNK2 and p130cas/BCAR1. Interacts (via SH2 domain) with the 'Tyr-9' phosphorylated form of PDPK1. Interacts with CBLC (By similarity).</text>
</comment>
<comment type="subunit">
    <molecule>Isoform Crk-II</molecule>
    <text evidence="2 6 7">Interacts (via SH2 domain) with PDGFRA (tyrosine phosphorylated) and PDGFRB (tyrosine phosphorylated) (By similarity). Interacts with EPHA3 (phosphorylated); upon activation of EPHA3 by the ligand EFNA5 and EPHA3 tyrosine kinase activity-dependent and mediates EFNA5-EPHA3 signaling through RHOA GTPase activation (PubMed:11870224). Interacts with KIT (PubMed:12878163). Interacts with PEAK3; the interaction requires PEAK3 homodimerization (By similarity).</text>
</comment>
<comment type="interaction">
    <interactant intactId="EBI-2906540">
        <id>Q64010</id>
    </interactant>
    <interactant intactId="EBI-475981">
        <id>P08069</id>
        <label>IGF1R</label>
    </interactant>
    <organismsDiffer>true</organismsDiffer>
    <experiments>3</experiments>
</comment>
<comment type="subcellular location">
    <subcellularLocation>
        <location evidence="1">Cytoplasm</location>
    </subcellularLocation>
    <subcellularLocation>
        <location evidence="1">Cell membrane</location>
    </subcellularLocation>
    <text evidence="1">Translocated to the plasma membrane upon cell adhesion.</text>
</comment>
<comment type="alternative products">
    <event type="alternative splicing"/>
    <isoform>
        <id>Q64010-1</id>
        <name>Crk-II</name>
        <sequence type="displayed"/>
    </isoform>
    <isoform>
        <id>Q64010-2</id>
        <name>Crk-I</name>
        <sequence type="described" ref="VSP_004174"/>
    </isoform>
</comment>
<comment type="tissue specificity">
    <text>Ubiquitous.</text>
</comment>
<comment type="domain">
    <text evidence="1">The C-terminal SH3 domain function as a negative modulator for transformation and the N-terminal SH3 domain appears to function as a positive regulator for transformation.</text>
</comment>
<comment type="domain">
    <text>The SH2 domain mediates interaction with tyrosine phosphorylated proteins. Mediates interaction with SHB.</text>
</comment>
<comment type="PTM">
    <text evidence="2 7 8">Phosphorylated on Tyr-221 upon cell adhesion. Results in the negative regulation of the association with SH2- and SH3-binding partners, possibly by the formation of an intramolecular interaction of phosphorylated Tyr-221 with the SH2 domain. This leads finally to the down-regulation of the Crk signaling pathway (PubMed:12878163, PubMed:8194526). Isoform Crk-II: Phosphorylated by KIT (By similarity).</text>
</comment>
<comment type="PTM">
    <text evidence="1">Proline isomerization at Pro-237 by PPIA acts as a switch between two conformations: an autoinhibitory conformation in the cis form, where the tandem SH3 domains interact intramolecularly, and an activated conformation in the trans form.</text>
</comment>
<comment type="similarity">
    <text evidence="10">Belongs to the CRK family.</text>
</comment>